<organism>
    <name type="scientific">Leptospira biflexa serovar Patoc (strain Patoc 1 / Ames)</name>
    <dbReference type="NCBI Taxonomy" id="355278"/>
    <lineage>
        <taxon>Bacteria</taxon>
        <taxon>Pseudomonadati</taxon>
        <taxon>Spirochaetota</taxon>
        <taxon>Spirochaetia</taxon>
        <taxon>Leptospirales</taxon>
        <taxon>Leptospiraceae</taxon>
        <taxon>Leptospira</taxon>
    </lineage>
</organism>
<name>HIS1_LEPBA</name>
<reference key="1">
    <citation type="journal article" date="2008" name="PLoS ONE">
        <title>Genome sequence of the saprophyte Leptospira biflexa provides insights into the evolution of Leptospira and the pathogenesis of leptospirosis.</title>
        <authorList>
            <person name="Picardeau M."/>
            <person name="Bulach D.M."/>
            <person name="Bouchier C."/>
            <person name="Zuerner R.L."/>
            <person name="Zidane N."/>
            <person name="Wilson P.J."/>
            <person name="Creno S."/>
            <person name="Kuczek E.S."/>
            <person name="Bommezzadri S."/>
            <person name="Davis J.C."/>
            <person name="McGrath A."/>
            <person name="Johnson M.J."/>
            <person name="Boursaux-Eude C."/>
            <person name="Seemann T."/>
            <person name="Rouy Z."/>
            <person name="Coppel R.L."/>
            <person name="Rood J.I."/>
            <person name="Lajus A."/>
            <person name="Davies J.K."/>
            <person name="Medigue C."/>
            <person name="Adler B."/>
        </authorList>
    </citation>
    <scope>NUCLEOTIDE SEQUENCE [LARGE SCALE GENOMIC DNA]</scope>
    <source>
        <strain>Patoc 1 / Ames</strain>
    </source>
</reference>
<protein>
    <recommendedName>
        <fullName evidence="1">ATP phosphoribosyltransferase</fullName>
        <shortName evidence="1">ATP-PRT</shortName>
        <shortName evidence="1">ATP-PRTase</shortName>
        <ecNumber evidence="1">2.4.2.17</ecNumber>
    </recommendedName>
</protein>
<sequence length="204" mass="22610">MLTLALPKGRLAEETALLLLSKGWLKNLPSEGSKELTYVSEDKRIRLLFVRSQDVCTYVEEAAADVGIVGWDIIREGGFDLIAPVDLKLGACRLSLASFPDFDLFAKRSKVRVATKYPNLTREYFFSKGISCEIIKLYGSIELAPIVGLSDCIVDLVSTGGTLKANGLKEFESILFSTARLVSNRSSFYHKHAELRSLIESLEN</sequence>
<keyword id="KW-0028">Amino-acid biosynthesis</keyword>
<keyword id="KW-0067">ATP-binding</keyword>
<keyword id="KW-0963">Cytoplasm</keyword>
<keyword id="KW-0328">Glycosyltransferase</keyword>
<keyword id="KW-0368">Histidine biosynthesis</keyword>
<keyword id="KW-0547">Nucleotide-binding</keyword>
<keyword id="KW-0808">Transferase</keyword>
<feature type="chain" id="PRO_1000135284" description="ATP phosphoribosyltransferase">
    <location>
        <begin position="1"/>
        <end position="204"/>
    </location>
</feature>
<proteinExistence type="inferred from homology"/>
<accession>B0SDL3</accession>
<comment type="function">
    <text evidence="1">Catalyzes the condensation of ATP and 5-phosphoribose 1-diphosphate to form N'-(5'-phosphoribosyl)-ATP (PR-ATP). Has a crucial role in the pathway because the rate of histidine biosynthesis seems to be controlled primarily by regulation of HisG enzymatic activity.</text>
</comment>
<comment type="catalytic activity">
    <reaction evidence="1">
        <text>1-(5-phospho-beta-D-ribosyl)-ATP + diphosphate = 5-phospho-alpha-D-ribose 1-diphosphate + ATP</text>
        <dbReference type="Rhea" id="RHEA:18473"/>
        <dbReference type="ChEBI" id="CHEBI:30616"/>
        <dbReference type="ChEBI" id="CHEBI:33019"/>
        <dbReference type="ChEBI" id="CHEBI:58017"/>
        <dbReference type="ChEBI" id="CHEBI:73183"/>
        <dbReference type="EC" id="2.4.2.17"/>
    </reaction>
</comment>
<comment type="pathway">
    <text evidence="1">Amino-acid biosynthesis; L-histidine biosynthesis; L-histidine from 5-phospho-alpha-D-ribose 1-diphosphate: step 1/9.</text>
</comment>
<comment type="subunit">
    <text evidence="1">Heteromultimer composed of HisG and HisZ subunits.</text>
</comment>
<comment type="subcellular location">
    <subcellularLocation>
        <location evidence="1">Cytoplasm</location>
    </subcellularLocation>
</comment>
<comment type="domain">
    <text>Lacks the C-terminal regulatory region which is replaced by HisZ.</text>
</comment>
<comment type="similarity">
    <text evidence="1">Belongs to the ATP phosphoribosyltransferase family. Short subfamily.</text>
</comment>
<gene>
    <name evidence="1" type="primary">hisG</name>
    <name type="ordered locus">LBF_2513</name>
</gene>
<evidence type="ECO:0000255" key="1">
    <source>
        <dbReference type="HAMAP-Rule" id="MF_01018"/>
    </source>
</evidence>
<dbReference type="EC" id="2.4.2.17" evidence="1"/>
<dbReference type="EMBL" id="CP000777">
    <property type="protein sequence ID" value="ABZ94997.1"/>
    <property type="molecule type" value="Genomic_DNA"/>
</dbReference>
<dbReference type="RefSeq" id="WP_012389532.1">
    <property type="nucleotide sequence ID" value="NC_010842.1"/>
</dbReference>
<dbReference type="SMR" id="B0SDL3"/>
<dbReference type="KEGG" id="lbf:LBF_2513"/>
<dbReference type="HOGENOM" id="CLU_038115_2_0_12"/>
<dbReference type="UniPathway" id="UPA00031">
    <property type="reaction ID" value="UER00006"/>
</dbReference>
<dbReference type="GO" id="GO:0005737">
    <property type="term" value="C:cytoplasm"/>
    <property type="evidence" value="ECO:0007669"/>
    <property type="project" value="UniProtKB-SubCell"/>
</dbReference>
<dbReference type="GO" id="GO:0005524">
    <property type="term" value="F:ATP binding"/>
    <property type="evidence" value="ECO:0007669"/>
    <property type="project" value="UniProtKB-KW"/>
</dbReference>
<dbReference type="GO" id="GO:0003879">
    <property type="term" value="F:ATP phosphoribosyltransferase activity"/>
    <property type="evidence" value="ECO:0007669"/>
    <property type="project" value="UniProtKB-UniRule"/>
</dbReference>
<dbReference type="GO" id="GO:0000105">
    <property type="term" value="P:L-histidine biosynthetic process"/>
    <property type="evidence" value="ECO:0007669"/>
    <property type="project" value="UniProtKB-UniRule"/>
</dbReference>
<dbReference type="CDD" id="cd13595">
    <property type="entry name" value="PBP2_HisGs"/>
    <property type="match status" value="1"/>
</dbReference>
<dbReference type="FunFam" id="3.40.190.10:FF:000008">
    <property type="entry name" value="ATP phosphoribosyltransferase"/>
    <property type="match status" value="1"/>
</dbReference>
<dbReference type="Gene3D" id="3.40.190.10">
    <property type="entry name" value="Periplasmic binding protein-like II"/>
    <property type="match status" value="2"/>
</dbReference>
<dbReference type="HAMAP" id="MF_01018">
    <property type="entry name" value="HisG_Short"/>
    <property type="match status" value="1"/>
</dbReference>
<dbReference type="InterPro" id="IPR013820">
    <property type="entry name" value="ATP_PRibTrfase_cat"/>
</dbReference>
<dbReference type="InterPro" id="IPR018198">
    <property type="entry name" value="ATP_PRibTrfase_CS"/>
</dbReference>
<dbReference type="InterPro" id="IPR001348">
    <property type="entry name" value="ATP_PRibTrfase_HisG"/>
</dbReference>
<dbReference type="InterPro" id="IPR024893">
    <property type="entry name" value="ATP_PRibTrfase_HisG_short"/>
</dbReference>
<dbReference type="NCBIfam" id="TIGR00070">
    <property type="entry name" value="hisG"/>
    <property type="match status" value="1"/>
</dbReference>
<dbReference type="PANTHER" id="PTHR21403:SF8">
    <property type="entry name" value="ATP PHOSPHORIBOSYLTRANSFERASE"/>
    <property type="match status" value="1"/>
</dbReference>
<dbReference type="PANTHER" id="PTHR21403">
    <property type="entry name" value="ATP PHOSPHORIBOSYLTRANSFERASE ATP-PRTASE"/>
    <property type="match status" value="1"/>
</dbReference>
<dbReference type="Pfam" id="PF01634">
    <property type="entry name" value="HisG"/>
    <property type="match status" value="1"/>
</dbReference>
<dbReference type="SUPFAM" id="SSF53850">
    <property type="entry name" value="Periplasmic binding protein-like II"/>
    <property type="match status" value="1"/>
</dbReference>
<dbReference type="PROSITE" id="PS01316">
    <property type="entry name" value="ATP_P_PHORIBOSYLTR"/>
    <property type="match status" value="1"/>
</dbReference>